<keyword id="KW-0687">Ribonucleoprotein</keyword>
<keyword id="KW-0689">Ribosomal protein</keyword>
<keyword id="KW-0694">RNA-binding</keyword>
<keyword id="KW-0699">rRNA-binding</keyword>
<gene>
    <name evidence="1" type="primary">rplN</name>
    <name type="ordered locus">CFF8240_0044</name>
</gene>
<comment type="function">
    <text evidence="1">Binds to 23S rRNA. Forms part of two intersubunit bridges in the 70S ribosome.</text>
</comment>
<comment type="subunit">
    <text evidence="1">Part of the 50S ribosomal subunit. Forms a cluster with proteins L3 and L19. In the 70S ribosome, L14 and L19 interact and together make contacts with the 16S rRNA in bridges B5 and B8.</text>
</comment>
<comment type="similarity">
    <text evidence="1">Belongs to the universal ribosomal protein uL14 family.</text>
</comment>
<evidence type="ECO:0000255" key="1">
    <source>
        <dbReference type="HAMAP-Rule" id="MF_01367"/>
    </source>
</evidence>
<evidence type="ECO:0000305" key="2"/>
<sequence length="122" mass="13314">MIQSFTRLAVADNSGAKELMCIKVLGGSKRRYASLGDIIVCSVKKALPNGKIKKGQVVKAVVVRTKKEVQRANGSLIRFDENAAVILDNKKEPVGTRIFGPVGREVRYANFMKIVSLAPEVL</sequence>
<reference key="1">
    <citation type="submission" date="2006-11" db="EMBL/GenBank/DDBJ databases">
        <title>Sequence of Campylobacter fetus subsp. fetus 82-40.</title>
        <authorList>
            <person name="Fouts D.E."/>
            <person name="Nelson K.E."/>
        </authorList>
    </citation>
    <scope>NUCLEOTIDE SEQUENCE [LARGE SCALE GENOMIC DNA]</scope>
    <source>
        <strain>82-40</strain>
    </source>
</reference>
<feature type="chain" id="PRO_1000055542" description="Large ribosomal subunit protein uL14">
    <location>
        <begin position="1"/>
        <end position="122"/>
    </location>
</feature>
<dbReference type="EMBL" id="CP000487">
    <property type="protein sequence ID" value="ABK82847.1"/>
    <property type="molecule type" value="Genomic_DNA"/>
</dbReference>
<dbReference type="RefSeq" id="WP_002847983.1">
    <property type="nucleotide sequence ID" value="NC_008599.1"/>
</dbReference>
<dbReference type="SMR" id="A0RM21"/>
<dbReference type="GeneID" id="61063887"/>
<dbReference type="KEGG" id="cff:CFF8240_0044"/>
<dbReference type="eggNOG" id="COG0093">
    <property type="taxonomic scope" value="Bacteria"/>
</dbReference>
<dbReference type="HOGENOM" id="CLU_095071_2_1_7"/>
<dbReference type="Proteomes" id="UP000000760">
    <property type="component" value="Chromosome"/>
</dbReference>
<dbReference type="GO" id="GO:0022625">
    <property type="term" value="C:cytosolic large ribosomal subunit"/>
    <property type="evidence" value="ECO:0007669"/>
    <property type="project" value="TreeGrafter"/>
</dbReference>
<dbReference type="GO" id="GO:0070180">
    <property type="term" value="F:large ribosomal subunit rRNA binding"/>
    <property type="evidence" value="ECO:0007669"/>
    <property type="project" value="TreeGrafter"/>
</dbReference>
<dbReference type="GO" id="GO:0003735">
    <property type="term" value="F:structural constituent of ribosome"/>
    <property type="evidence" value="ECO:0007669"/>
    <property type="project" value="InterPro"/>
</dbReference>
<dbReference type="GO" id="GO:0006412">
    <property type="term" value="P:translation"/>
    <property type="evidence" value="ECO:0007669"/>
    <property type="project" value="UniProtKB-UniRule"/>
</dbReference>
<dbReference type="CDD" id="cd00337">
    <property type="entry name" value="Ribosomal_uL14"/>
    <property type="match status" value="1"/>
</dbReference>
<dbReference type="FunFam" id="2.40.150.20:FF:000001">
    <property type="entry name" value="50S ribosomal protein L14"/>
    <property type="match status" value="1"/>
</dbReference>
<dbReference type="Gene3D" id="2.40.150.20">
    <property type="entry name" value="Ribosomal protein L14"/>
    <property type="match status" value="1"/>
</dbReference>
<dbReference type="HAMAP" id="MF_01367">
    <property type="entry name" value="Ribosomal_uL14"/>
    <property type="match status" value="1"/>
</dbReference>
<dbReference type="InterPro" id="IPR000218">
    <property type="entry name" value="Ribosomal_uL14"/>
</dbReference>
<dbReference type="InterPro" id="IPR005745">
    <property type="entry name" value="Ribosomal_uL14_bac-type"/>
</dbReference>
<dbReference type="InterPro" id="IPR019972">
    <property type="entry name" value="Ribosomal_uL14_CS"/>
</dbReference>
<dbReference type="InterPro" id="IPR036853">
    <property type="entry name" value="Ribosomal_uL14_sf"/>
</dbReference>
<dbReference type="NCBIfam" id="TIGR01067">
    <property type="entry name" value="rplN_bact"/>
    <property type="match status" value="1"/>
</dbReference>
<dbReference type="PANTHER" id="PTHR11761">
    <property type="entry name" value="50S/60S RIBOSOMAL PROTEIN L14/L23"/>
    <property type="match status" value="1"/>
</dbReference>
<dbReference type="PANTHER" id="PTHR11761:SF3">
    <property type="entry name" value="LARGE RIBOSOMAL SUBUNIT PROTEIN UL14M"/>
    <property type="match status" value="1"/>
</dbReference>
<dbReference type="Pfam" id="PF00238">
    <property type="entry name" value="Ribosomal_L14"/>
    <property type="match status" value="1"/>
</dbReference>
<dbReference type="SMART" id="SM01374">
    <property type="entry name" value="Ribosomal_L14"/>
    <property type="match status" value="1"/>
</dbReference>
<dbReference type="SUPFAM" id="SSF50193">
    <property type="entry name" value="Ribosomal protein L14"/>
    <property type="match status" value="1"/>
</dbReference>
<dbReference type="PROSITE" id="PS00049">
    <property type="entry name" value="RIBOSOMAL_L14"/>
    <property type="match status" value="1"/>
</dbReference>
<name>RL14_CAMFF</name>
<protein>
    <recommendedName>
        <fullName evidence="1">Large ribosomal subunit protein uL14</fullName>
    </recommendedName>
    <alternativeName>
        <fullName evidence="2">50S ribosomal protein L14</fullName>
    </alternativeName>
</protein>
<organism>
    <name type="scientific">Campylobacter fetus subsp. fetus (strain 82-40)</name>
    <dbReference type="NCBI Taxonomy" id="360106"/>
    <lineage>
        <taxon>Bacteria</taxon>
        <taxon>Pseudomonadati</taxon>
        <taxon>Campylobacterota</taxon>
        <taxon>Epsilonproteobacteria</taxon>
        <taxon>Campylobacterales</taxon>
        <taxon>Campylobacteraceae</taxon>
        <taxon>Campylobacter</taxon>
    </lineage>
</organism>
<accession>A0RM21</accession>
<proteinExistence type="inferred from homology"/>